<organism>
    <name type="scientific">Stutzerimonas stutzeri (strain A1501)</name>
    <name type="common">Pseudomonas stutzeri</name>
    <dbReference type="NCBI Taxonomy" id="379731"/>
    <lineage>
        <taxon>Bacteria</taxon>
        <taxon>Pseudomonadati</taxon>
        <taxon>Pseudomonadota</taxon>
        <taxon>Gammaproteobacteria</taxon>
        <taxon>Pseudomonadales</taxon>
        <taxon>Pseudomonadaceae</taxon>
        <taxon>Stutzerimonas</taxon>
    </lineage>
</organism>
<sequence>MKDRLFVISQYVLPHHLISRLAGCLAECRLPWVKNTFIKWFVRHFQVDMREAQIEEPTAYEHFNAFFTRALKDGARPLDSTPGAILNPCDGAISQLGKIEQGRIFQAKGHSFSAMELLGGDHERAAPFMGGAFATVYLSPKDYHRVHMPVSGTLREMVYVPGRIFSVNTVTAQGVPELFARNERVVCLFDTEHGPMAMVLVGAMIVASIETVWAGLVTPPKRSLKTFRYDEAARAPIHLEKGAEMGRFKLGSTVILLFGPDRVRWAEQLGPLSPVCMGESLGQAAITAAASEAIELQ</sequence>
<name>PSD_STUS1</name>
<keyword id="KW-1003">Cell membrane</keyword>
<keyword id="KW-0210">Decarboxylase</keyword>
<keyword id="KW-0444">Lipid biosynthesis</keyword>
<keyword id="KW-0443">Lipid metabolism</keyword>
<keyword id="KW-0456">Lyase</keyword>
<keyword id="KW-0472">Membrane</keyword>
<keyword id="KW-0594">Phospholipid biosynthesis</keyword>
<keyword id="KW-1208">Phospholipid metabolism</keyword>
<keyword id="KW-0670">Pyruvate</keyword>
<keyword id="KW-1185">Reference proteome</keyword>
<keyword id="KW-0865">Zymogen</keyword>
<proteinExistence type="inferred from homology"/>
<protein>
    <recommendedName>
        <fullName evidence="1">Phosphatidylserine decarboxylase proenzyme</fullName>
        <ecNumber evidence="1">4.1.1.65</ecNumber>
    </recommendedName>
    <component>
        <recommendedName>
            <fullName evidence="1">Phosphatidylserine decarboxylase alpha chain</fullName>
        </recommendedName>
    </component>
    <component>
        <recommendedName>
            <fullName evidence="1">Phosphatidylserine decarboxylase beta chain</fullName>
        </recommendedName>
    </component>
</protein>
<gene>
    <name evidence="1" type="primary">psd</name>
    <name type="ordered locus">PST_3800</name>
</gene>
<dbReference type="EC" id="4.1.1.65" evidence="1"/>
<dbReference type="EMBL" id="CP000304">
    <property type="protein sequence ID" value="ABP81423.1"/>
    <property type="molecule type" value="Genomic_DNA"/>
</dbReference>
<dbReference type="RefSeq" id="WP_011914808.1">
    <property type="nucleotide sequence ID" value="NC_009434.1"/>
</dbReference>
<dbReference type="SMR" id="A4VR22"/>
<dbReference type="KEGG" id="psa:PST_3800"/>
<dbReference type="eggNOG" id="COG0688">
    <property type="taxonomic scope" value="Bacteria"/>
</dbReference>
<dbReference type="HOGENOM" id="CLU_029061_4_1_6"/>
<dbReference type="UniPathway" id="UPA00558">
    <property type="reaction ID" value="UER00616"/>
</dbReference>
<dbReference type="Proteomes" id="UP000000233">
    <property type="component" value="Chromosome"/>
</dbReference>
<dbReference type="GO" id="GO:0005886">
    <property type="term" value="C:plasma membrane"/>
    <property type="evidence" value="ECO:0007669"/>
    <property type="project" value="UniProtKB-SubCell"/>
</dbReference>
<dbReference type="GO" id="GO:0004609">
    <property type="term" value="F:phosphatidylserine decarboxylase activity"/>
    <property type="evidence" value="ECO:0007669"/>
    <property type="project" value="UniProtKB-UniRule"/>
</dbReference>
<dbReference type="GO" id="GO:0006646">
    <property type="term" value="P:phosphatidylethanolamine biosynthetic process"/>
    <property type="evidence" value="ECO:0007669"/>
    <property type="project" value="UniProtKB-UniRule"/>
</dbReference>
<dbReference type="HAMAP" id="MF_00662">
    <property type="entry name" value="PS_decarb_PSD_B_type1"/>
    <property type="match status" value="1"/>
</dbReference>
<dbReference type="InterPro" id="IPR003817">
    <property type="entry name" value="PS_Dcarbxylase"/>
</dbReference>
<dbReference type="InterPro" id="IPR033177">
    <property type="entry name" value="PSD-B"/>
</dbReference>
<dbReference type="InterPro" id="IPR033178">
    <property type="entry name" value="PSD_type1_pro"/>
</dbReference>
<dbReference type="NCBIfam" id="TIGR00163">
    <property type="entry name" value="PS_decarb"/>
    <property type="match status" value="1"/>
</dbReference>
<dbReference type="PANTHER" id="PTHR10067">
    <property type="entry name" value="PHOSPHATIDYLSERINE DECARBOXYLASE"/>
    <property type="match status" value="1"/>
</dbReference>
<dbReference type="PANTHER" id="PTHR10067:SF6">
    <property type="entry name" value="PHOSPHATIDYLSERINE DECARBOXYLASE PROENZYME, MITOCHONDRIAL"/>
    <property type="match status" value="1"/>
</dbReference>
<dbReference type="Pfam" id="PF02666">
    <property type="entry name" value="PS_Dcarbxylase"/>
    <property type="match status" value="1"/>
</dbReference>
<evidence type="ECO:0000255" key="1">
    <source>
        <dbReference type="HAMAP-Rule" id="MF_00662"/>
    </source>
</evidence>
<accession>A4VR22</accession>
<comment type="function">
    <text evidence="1">Catalyzes the formation of phosphatidylethanolamine (PtdEtn) from phosphatidylserine (PtdSer).</text>
</comment>
<comment type="catalytic activity">
    <reaction evidence="1">
        <text>a 1,2-diacyl-sn-glycero-3-phospho-L-serine + H(+) = a 1,2-diacyl-sn-glycero-3-phosphoethanolamine + CO2</text>
        <dbReference type="Rhea" id="RHEA:20828"/>
        <dbReference type="ChEBI" id="CHEBI:15378"/>
        <dbReference type="ChEBI" id="CHEBI:16526"/>
        <dbReference type="ChEBI" id="CHEBI:57262"/>
        <dbReference type="ChEBI" id="CHEBI:64612"/>
        <dbReference type="EC" id="4.1.1.65"/>
    </reaction>
</comment>
<comment type="cofactor">
    <cofactor evidence="1">
        <name>pyruvate</name>
        <dbReference type="ChEBI" id="CHEBI:15361"/>
    </cofactor>
    <text evidence="1">Binds 1 pyruvoyl group covalently per subunit.</text>
</comment>
<comment type="pathway">
    <text evidence="1">Phospholipid metabolism; phosphatidylethanolamine biosynthesis; phosphatidylethanolamine from CDP-diacylglycerol: step 2/2.</text>
</comment>
<comment type="subunit">
    <text evidence="1">Heterodimer of a large membrane-associated beta subunit and a small pyruvoyl-containing alpha subunit.</text>
</comment>
<comment type="subcellular location">
    <subcellularLocation>
        <location evidence="1">Cell membrane</location>
        <topology evidence="1">Peripheral membrane protein</topology>
    </subcellularLocation>
</comment>
<comment type="PTM">
    <text evidence="1">Is synthesized initially as an inactive proenzyme. Formation of the active enzyme involves a self-maturation process in which the active site pyruvoyl group is generated from an internal serine residue via an autocatalytic post-translational modification. Two non-identical subunits are generated from the proenzyme in this reaction, and the pyruvate is formed at the N-terminus of the alpha chain, which is derived from the carboxyl end of the proenzyme. The autoendoproteolytic cleavage occurs by a canonical serine protease mechanism, in which the side chain hydroxyl group of the serine supplies its oxygen atom to form the C-terminus of the beta chain, while the remainder of the serine residue undergoes an oxidative deamination to produce ammonia and the pyruvoyl prosthetic group on the alpha chain. During this reaction, the Ser that is part of the protease active site of the proenzyme becomes the pyruvoyl prosthetic group, which constitutes an essential element of the active site of the mature decarboxylase.</text>
</comment>
<comment type="similarity">
    <text evidence="1">Belongs to the phosphatidylserine decarboxylase family. PSD-B subfamily. Prokaryotic type I sub-subfamily.</text>
</comment>
<feature type="chain" id="PRO_1000026574" description="Phosphatidylserine decarboxylase beta chain" evidence="1">
    <location>
        <begin position="1"/>
        <end position="251"/>
    </location>
</feature>
<feature type="chain" id="PRO_1000026575" description="Phosphatidylserine decarboxylase alpha chain" evidence="1">
    <location>
        <begin position="252"/>
        <end position="297"/>
    </location>
</feature>
<feature type="active site" description="Charge relay system; for autoendoproteolytic cleavage activity" evidence="1">
    <location>
        <position position="90"/>
    </location>
</feature>
<feature type="active site" description="Charge relay system; for autoendoproteolytic cleavage activity" evidence="1">
    <location>
        <position position="147"/>
    </location>
</feature>
<feature type="active site" description="Charge relay system; for autoendoproteolytic cleavage activity" evidence="1">
    <location>
        <position position="252"/>
    </location>
</feature>
<feature type="active site" description="Schiff-base intermediate with substrate; via pyruvic acid; for decarboxylase activity" evidence="1">
    <location>
        <position position="252"/>
    </location>
</feature>
<feature type="site" description="Cleavage (non-hydrolytic); by autocatalysis" evidence="1">
    <location>
        <begin position="251"/>
        <end position="252"/>
    </location>
</feature>
<feature type="modified residue" description="Pyruvic acid (Ser); by autocatalysis" evidence="1">
    <location>
        <position position="252"/>
    </location>
</feature>
<reference key="1">
    <citation type="journal article" date="2008" name="Proc. Natl. Acad. Sci. U.S.A.">
        <title>Nitrogen fixation island and rhizosphere competence traits in the genome of root-associated Pseudomonas stutzeri A1501.</title>
        <authorList>
            <person name="Yan Y."/>
            <person name="Yang J."/>
            <person name="Dou Y."/>
            <person name="Chen M."/>
            <person name="Ping S."/>
            <person name="Peng J."/>
            <person name="Lu W."/>
            <person name="Zhang W."/>
            <person name="Yao Z."/>
            <person name="Li H."/>
            <person name="Liu W."/>
            <person name="He S."/>
            <person name="Geng L."/>
            <person name="Zhang X."/>
            <person name="Yang F."/>
            <person name="Yu H."/>
            <person name="Zhan Y."/>
            <person name="Li D."/>
            <person name="Lin Z."/>
            <person name="Wang Y."/>
            <person name="Elmerich C."/>
            <person name="Lin M."/>
            <person name="Jin Q."/>
        </authorList>
    </citation>
    <scope>NUCLEOTIDE SEQUENCE [LARGE SCALE GENOMIC DNA]</scope>
    <source>
        <strain>A1501</strain>
    </source>
</reference>